<keyword id="KW-0007">Acetylation</keyword>
<keyword id="KW-0010">Activator</keyword>
<keyword id="KW-0025">Alternative splicing</keyword>
<keyword id="KW-0037">Angiogenesis</keyword>
<keyword id="KW-0053">Apoptosis</keyword>
<keyword id="KW-0165">Cleavage on pair of basic residues</keyword>
<keyword id="KW-0963">Cytoplasm</keyword>
<keyword id="KW-0217">Developmental protein</keyword>
<keyword id="KW-0221">Differentiation</keyword>
<keyword id="KW-0238">DNA-binding</keyword>
<keyword id="KW-0256">Endoplasmic reticulum</keyword>
<keyword id="KW-0472">Membrane</keyword>
<keyword id="KW-0517">Myogenesis</keyword>
<keyword id="KW-0539">Nucleus</keyword>
<keyword id="KW-0597">Phosphoprotein</keyword>
<keyword id="KW-1185">Reference proteome</keyword>
<keyword id="KW-0735">Signal-anchor</keyword>
<keyword id="KW-0346">Stress response</keyword>
<keyword id="KW-0804">Transcription</keyword>
<keyword id="KW-0805">Transcription regulation</keyword>
<keyword id="KW-0812">Transmembrane</keyword>
<keyword id="KW-1133">Transmembrane helix</keyword>
<keyword id="KW-0832">Ubl conjugation</keyword>
<keyword id="KW-0834">Unfolded protein response</keyword>
<accession>Q3SZZ2</accession>
<organism>
    <name type="scientific">Bos taurus</name>
    <name type="common">Bovine</name>
    <dbReference type="NCBI Taxonomy" id="9913"/>
    <lineage>
        <taxon>Eukaryota</taxon>
        <taxon>Metazoa</taxon>
        <taxon>Chordata</taxon>
        <taxon>Craniata</taxon>
        <taxon>Vertebrata</taxon>
        <taxon>Euteleostomi</taxon>
        <taxon>Mammalia</taxon>
        <taxon>Eutheria</taxon>
        <taxon>Laurasiatheria</taxon>
        <taxon>Artiodactyla</taxon>
        <taxon>Ruminantia</taxon>
        <taxon>Pecora</taxon>
        <taxon>Bovidae</taxon>
        <taxon>Bovinae</taxon>
        <taxon>Bos</taxon>
    </lineage>
</organism>
<protein>
    <recommendedName>
        <fullName evidence="2">X-box-binding protein 1</fullName>
        <shortName evidence="2">XBP-1</shortName>
    </recommendedName>
    <component>
        <recommendedName>
            <fullName evidence="2">X-box-binding protein 1, cytoplasmic form</fullName>
        </recommendedName>
    </component>
    <component>
        <recommendedName>
            <fullName evidence="2">X-box-binding protein 1, luminal form</fullName>
        </recommendedName>
    </component>
</protein>
<sequence>MVVVAPAQSPAAGAPKVLLLSGQPAATGGAPAGRALPVMVPGQQGASPEGASGVPPQARKRQRLTHLSPEEKALRRKLKNRVAAQTARDRKKARMSELEQQVVDLEEENQKLLLENQLLREKTHGLVVENQELRQRLGMDALVTEEEAETKGNGAGLVAGSAESAALRLRAPLQQVQAQLSPLQNISPWTLMALTLQTLSLTSCWAFCSTWTQSCSSDVLPQSLPAWSSSQKWTQKDPVPYRPPLLHPWGRHQPSWKPLMN</sequence>
<gene>
    <name evidence="2" type="primary">XBP1</name>
</gene>
<reference key="1">
    <citation type="submission" date="2005-08" db="EMBL/GenBank/DDBJ databases">
        <authorList>
            <consortium name="NIH - Mammalian Gene Collection (MGC) project"/>
        </authorList>
    </citation>
    <scope>NUCLEOTIDE SEQUENCE [LARGE SCALE MRNA] (ISOFORM 1)</scope>
    <source>
        <strain>Crossbred X Angus</strain>
        <tissue>Ileum</tissue>
    </source>
</reference>
<dbReference type="EMBL" id="BC102639">
    <property type="protein sequence ID" value="AAI02640.1"/>
    <property type="molecule type" value="mRNA"/>
</dbReference>
<dbReference type="RefSeq" id="NP_001029899.1">
    <molecule id="Q3SZZ2-1"/>
    <property type="nucleotide sequence ID" value="NM_001034727.3"/>
</dbReference>
<dbReference type="SMR" id="Q3SZZ2"/>
<dbReference type="FunCoup" id="Q3SZZ2">
    <property type="interactions" value="293"/>
</dbReference>
<dbReference type="STRING" id="9913.ENSBTAP00000007835"/>
<dbReference type="PaxDb" id="9913-ENSBTAP00000007835"/>
<dbReference type="GeneID" id="541236"/>
<dbReference type="KEGG" id="bta:541236"/>
<dbReference type="CTD" id="7494"/>
<dbReference type="eggNOG" id="KOG4005">
    <property type="taxonomic scope" value="Eukaryota"/>
</dbReference>
<dbReference type="HOGENOM" id="CLU_093516_0_0_1"/>
<dbReference type="InParanoid" id="Q3SZZ2"/>
<dbReference type="OrthoDB" id="20960at2759"/>
<dbReference type="TreeFam" id="TF319837"/>
<dbReference type="Proteomes" id="UP000009136">
    <property type="component" value="Unplaced"/>
</dbReference>
<dbReference type="GO" id="GO:0005737">
    <property type="term" value="C:cytoplasm"/>
    <property type="evidence" value="ECO:0000250"/>
    <property type="project" value="UniProtKB"/>
</dbReference>
<dbReference type="GO" id="GO:0005783">
    <property type="term" value="C:endoplasmic reticulum"/>
    <property type="evidence" value="ECO:0000250"/>
    <property type="project" value="UniProtKB"/>
</dbReference>
<dbReference type="GO" id="GO:0005789">
    <property type="term" value="C:endoplasmic reticulum membrane"/>
    <property type="evidence" value="ECO:0007669"/>
    <property type="project" value="UniProtKB-SubCell"/>
</dbReference>
<dbReference type="GO" id="GO:0005634">
    <property type="term" value="C:nucleus"/>
    <property type="evidence" value="ECO:0000250"/>
    <property type="project" value="UniProtKB"/>
</dbReference>
<dbReference type="GO" id="GO:0031490">
    <property type="term" value="F:chromatin DNA binding"/>
    <property type="evidence" value="ECO:0000250"/>
    <property type="project" value="UniProtKB"/>
</dbReference>
<dbReference type="GO" id="GO:0000987">
    <property type="term" value="F:cis-regulatory region sequence-specific DNA binding"/>
    <property type="evidence" value="ECO:0000250"/>
    <property type="project" value="UniProtKB"/>
</dbReference>
<dbReference type="GO" id="GO:0003700">
    <property type="term" value="F:DNA-binding transcription factor activity"/>
    <property type="evidence" value="ECO:0000250"/>
    <property type="project" value="UniProtKB"/>
</dbReference>
<dbReference type="GO" id="GO:0000981">
    <property type="term" value="F:DNA-binding transcription factor activity, RNA polymerase II-specific"/>
    <property type="evidence" value="ECO:0000318"/>
    <property type="project" value="GO_Central"/>
</dbReference>
<dbReference type="GO" id="GO:0046982">
    <property type="term" value="F:protein heterodimerization activity"/>
    <property type="evidence" value="ECO:0000250"/>
    <property type="project" value="UniProtKB"/>
</dbReference>
<dbReference type="GO" id="GO:0000978">
    <property type="term" value="F:RNA polymerase II cis-regulatory region sequence-specific DNA binding"/>
    <property type="evidence" value="ECO:0000250"/>
    <property type="project" value="UniProtKB"/>
</dbReference>
<dbReference type="GO" id="GO:0000977">
    <property type="term" value="F:RNA polymerase II transcription regulatory region sequence-specific DNA binding"/>
    <property type="evidence" value="ECO:0000250"/>
    <property type="project" value="UniProtKB"/>
</dbReference>
<dbReference type="GO" id="GO:0060612">
    <property type="term" value="P:adipose tissue development"/>
    <property type="evidence" value="ECO:0000250"/>
    <property type="project" value="UniProtKB"/>
</dbReference>
<dbReference type="GO" id="GO:0001525">
    <property type="term" value="P:angiogenesis"/>
    <property type="evidence" value="ECO:0000250"/>
    <property type="project" value="UniProtKB"/>
</dbReference>
<dbReference type="GO" id="GO:0006915">
    <property type="term" value="P:apoptotic process"/>
    <property type="evidence" value="ECO:0007669"/>
    <property type="project" value="UniProtKB-KW"/>
</dbReference>
<dbReference type="GO" id="GO:0030154">
    <property type="term" value="P:cell differentiation"/>
    <property type="evidence" value="ECO:0007669"/>
    <property type="project" value="UniProtKB-KW"/>
</dbReference>
<dbReference type="GO" id="GO:0071230">
    <property type="term" value="P:cellular response to amino acid stimulus"/>
    <property type="evidence" value="ECO:0000250"/>
    <property type="project" value="UniProtKB"/>
</dbReference>
<dbReference type="GO" id="GO:0071498">
    <property type="term" value="P:cellular response to fluid shear stress"/>
    <property type="evidence" value="ECO:0000250"/>
    <property type="project" value="UniProtKB"/>
</dbReference>
<dbReference type="GO" id="GO:0042149">
    <property type="term" value="P:cellular response to glucose starvation"/>
    <property type="evidence" value="ECO:0000250"/>
    <property type="project" value="UniProtKB"/>
</dbReference>
<dbReference type="GO" id="GO:0071353">
    <property type="term" value="P:cellular response to interleukin-4"/>
    <property type="evidence" value="ECO:0000250"/>
    <property type="project" value="UniProtKB"/>
</dbReference>
<dbReference type="GO" id="GO:0071499">
    <property type="term" value="P:cellular response to laminar fluid shear stress"/>
    <property type="evidence" value="ECO:0000250"/>
    <property type="project" value="UniProtKB"/>
</dbReference>
<dbReference type="GO" id="GO:0071222">
    <property type="term" value="P:cellular response to lipopolysaccharide"/>
    <property type="evidence" value="ECO:0000250"/>
    <property type="project" value="UniProtKB"/>
</dbReference>
<dbReference type="GO" id="GO:0071375">
    <property type="term" value="P:cellular response to peptide hormone stimulus"/>
    <property type="evidence" value="ECO:0000250"/>
    <property type="project" value="UniProtKB"/>
</dbReference>
<dbReference type="GO" id="GO:0042632">
    <property type="term" value="P:cholesterol homeostasis"/>
    <property type="evidence" value="ECO:0000250"/>
    <property type="project" value="UniProtKB"/>
</dbReference>
<dbReference type="GO" id="GO:0030968">
    <property type="term" value="P:endoplasmic reticulum unfolded protein response"/>
    <property type="evidence" value="ECO:0000250"/>
    <property type="project" value="UniProtKB"/>
</dbReference>
<dbReference type="GO" id="GO:0001935">
    <property type="term" value="P:endothelial cell proliferation"/>
    <property type="evidence" value="ECO:0000250"/>
    <property type="project" value="UniProtKB"/>
</dbReference>
<dbReference type="GO" id="GO:0055089">
    <property type="term" value="P:fatty acid homeostasis"/>
    <property type="evidence" value="ECO:0000250"/>
    <property type="project" value="UniProtKB"/>
</dbReference>
<dbReference type="GO" id="GO:0035356">
    <property type="term" value="P:intracellular triglyceride homeostasis"/>
    <property type="evidence" value="ECO:0000250"/>
    <property type="project" value="UniProtKB"/>
</dbReference>
<dbReference type="GO" id="GO:0001889">
    <property type="term" value="P:liver development"/>
    <property type="evidence" value="ECO:0000250"/>
    <property type="project" value="UniProtKB"/>
</dbReference>
<dbReference type="GO" id="GO:0007517">
    <property type="term" value="P:muscle organ development"/>
    <property type="evidence" value="ECO:0007669"/>
    <property type="project" value="UniProtKB-KW"/>
</dbReference>
<dbReference type="GO" id="GO:0043066">
    <property type="term" value="P:negative regulation of apoptotic process"/>
    <property type="evidence" value="ECO:0000250"/>
    <property type="project" value="UniProtKB"/>
</dbReference>
<dbReference type="GO" id="GO:0045579">
    <property type="term" value="P:positive regulation of B cell differentiation"/>
    <property type="evidence" value="ECO:0000250"/>
    <property type="project" value="UniProtKB"/>
</dbReference>
<dbReference type="GO" id="GO:0045600">
    <property type="term" value="P:positive regulation of fat cell differentiation"/>
    <property type="evidence" value="ECO:0000250"/>
    <property type="project" value="UniProtKB"/>
</dbReference>
<dbReference type="GO" id="GO:2000347">
    <property type="term" value="P:positive regulation of hepatocyte proliferation"/>
    <property type="evidence" value="ECO:0000250"/>
    <property type="project" value="UniProtKB"/>
</dbReference>
<dbReference type="GO" id="GO:0002639">
    <property type="term" value="P:positive regulation of immunoglobulin production"/>
    <property type="evidence" value="ECO:0000250"/>
    <property type="project" value="UniProtKB"/>
</dbReference>
<dbReference type="GO" id="GO:1903489">
    <property type="term" value="P:positive regulation of lactation"/>
    <property type="evidence" value="ECO:0000250"/>
    <property type="project" value="UniProtKB"/>
</dbReference>
<dbReference type="GO" id="GO:0045348">
    <property type="term" value="P:positive regulation of MHC class II biosynthetic process"/>
    <property type="evidence" value="ECO:0000250"/>
    <property type="project" value="UniProtKB"/>
</dbReference>
<dbReference type="GO" id="GO:1900100">
    <property type="term" value="P:positive regulation of plasma cell differentiation"/>
    <property type="evidence" value="ECO:0000250"/>
    <property type="project" value="UniProtKB"/>
</dbReference>
<dbReference type="GO" id="GO:0045582">
    <property type="term" value="P:positive regulation of T cell differentiation"/>
    <property type="evidence" value="ECO:0000250"/>
    <property type="project" value="UniProtKB"/>
</dbReference>
<dbReference type="GO" id="GO:0045944">
    <property type="term" value="P:positive regulation of transcription by RNA polymerase II"/>
    <property type="evidence" value="ECO:0000250"/>
    <property type="project" value="UniProtKB"/>
</dbReference>
<dbReference type="GO" id="GO:0031648">
    <property type="term" value="P:protein destabilization"/>
    <property type="evidence" value="ECO:0000250"/>
    <property type="project" value="UniProtKB"/>
</dbReference>
<dbReference type="GO" id="GO:0010506">
    <property type="term" value="P:regulation of autophagy"/>
    <property type="evidence" value="ECO:0000250"/>
    <property type="project" value="UniProtKB"/>
</dbReference>
<dbReference type="GO" id="GO:0034976">
    <property type="term" value="P:response to endoplasmic reticulum stress"/>
    <property type="evidence" value="ECO:0000250"/>
    <property type="project" value="UniProtKB"/>
</dbReference>
<dbReference type="GO" id="GO:1990418">
    <property type="term" value="P:response to insulin-like growth factor stimulus"/>
    <property type="evidence" value="ECO:0000250"/>
    <property type="project" value="UniProtKB"/>
</dbReference>
<dbReference type="GO" id="GO:0055092">
    <property type="term" value="P:sterol homeostasis"/>
    <property type="evidence" value="ECO:0000250"/>
    <property type="project" value="UniProtKB"/>
</dbReference>
<dbReference type="GO" id="GO:0006511">
    <property type="term" value="P:ubiquitin-dependent protein catabolic process"/>
    <property type="evidence" value="ECO:0000250"/>
    <property type="project" value="UniProtKB"/>
</dbReference>
<dbReference type="CDD" id="cd14691">
    <property type="entry name" value="bZIP_XBP1"/>
    <property type="match status" value="1"/>
</dbReference>
<dbReference type="FunFam" id="1.20.5.170:FF:000049">
    <property type="entry name" value="X-box binding protein 1"/>
    <property type="match status" value="1"/>
</dbReference>
<dbReference type="Gene3D" id="1.20.5.170">
    <property type="match status" value="1"/>
</dbReference>
<dbReference type="InterPro" id="IPR004827">
    <property type="entry name" value="bZIP"/>
</dbReference>
<dbReference type="InterPro" id="IPR046347">
    <property type="entry name" value="bZIP_sf"/>
</dbReference>
<dbReference type="InterPro" id="IPR052470">
    <property type="entry name" value="ER_Stress-Reg_TF"/>
</dbReference>
<dbReference type="PANTHER" id="PTHR46542">
    <property type="entry name" value="X-BOX BINDING PROTEIN 1"/>
    <property type="match status" value="1"/>
</dbReference>
<dbReference type="PANTHER" id="PTHR46542:SF3">
    <property type="entry name" value="X-BOX-BINDING PROTEIN 1"/>
    <property type="match status" value="1"/>
</dbReference>
<dbReference type="Pfam" id="PF07716">
    <property type="entry name" value="bZIP_2"/>
    <property type="match status" value="1"/>
</dbReference>
<dbReference type="SMART" id="SM00338">
    <property type="entry name" value="BRLZ"/>
    <property type="match status" value="1"/>
</dbReference>
<dbReference type="SUPFAM" id="SSF57959">
    <property type="entry name" value="Leucine zipper domain"/>
    <property type="match status" value="1"/>
</dbReference>
<dbReference type="PROSITE" id="PS50217">
    <property type="entry name" value="BZIP"/>
    <property type="match status" value="1"/>
</dbReference>
<dbReference type="PROSITE" id="PS00036">
    <property type="entry name" value="BZIP_BASIC"/>
    <property type="match status" value="1"/>
</dbReference>
<evidence type="ECO:0000250" key="1">
    <source>
        <dbReference type="UniProtKB" id="O35426"/>
    </source>
</evidence>
<evidence type="ECO:0000250" key="2">
    <source>
        <dbReference type="UniProtKB" id="P17861"/>
    </source>
</evidence>
<evidence type="ECO:0000255" key="3"/>
<evidence type="ECO:0000255" key="4">
    <source>
        <dbReference type="PROSITE-ProRule" id="PRU00978"/>
    </source>
</evidence>
<evidence type="ECO:0000256" key="5">
    <source>
        <dbReference type="SAM" id="MobiDB-lite"/>
    </source>
</evidence>
<evidence type="ECO:0000305" key="6"/>
<name>XBP1_BOVIN</name>
<comment type="function">
    <text evidence="1 2">Functions as a transcription factor during endoplasmic reticulum (ER) stress by regulating the unfolded protein response (UPR). Required for cardiac myogenesis and hepatogenesis during embryonic development, and the development of secretory tissues such as exocrine pancreas and salivary gland. Involved in terminal differentiation of B lymphocytes to plasma cells and production of immunoglobulins. Modulates the cellular response to ER stress in a PIK3R-dependent manner. Binds to the cis-acting X box present in the promoter regions of major histocompatibility complex class II genes. Involved in VEGF-induced endothelial cell (EC) proliferation and retinal blood vessel formation during embryonic development but also for angiogenesis in adult tissues under ischemic conditions. Functions also as a major regulator of the UPR in obesity-induced insulin resistance and type 2 diabetes for the management of obesity and diabetes prevention.</text>
</comment>
<comment type="function">
    <molecule>Isoform 1</molecule>
    <text evidence="1 2">Acts as a weak transcriptional factor. Together with HDAC3, contributes to the activation of NFE2L2-mediated HMOX1 transcription factor gene expression in a PI(3)K/mTORC2/Akt-dependent signaling pathway leading to EC survival under disturbed flow/oxidative stress. Binds to the ER stress response element (ERSE) upon ER stress. Binds to the consensus 5'-GATGACGTG[TG]N(3)[AT]T-3' sequence related to cAMP responsive element (CRE)-like sequences. Associates preferentially to the HDAC3 gene promoter region in a static flow-dependent manner. Binds to the CDH5/VE-cadherin gene promoter region.</text>
</comment>
<comment type="subunit">
    <text evidence="1 2">Isoform 1 interacts with HM13. Isoform 1 interacts with RNF139; the interaction induces ubiquitination and degradation of isoform 1. Isoform 1 interacts (via luminal domain) with DERL1; the interaction obviates the need for ectodomain shedding prior HM13/SPP-mediated XBP1 isoform 1 cleavage. Isoform 1 interacts with HDAC3 and AKT1; the interactions occur in endothelial cell (EC) under disturbed flow. Isoform 1 interacts with the oncoprotein FOS. Interacts with SIRT1.</text>
</comment>
<comment type="subcellular location">
    <subcellularLocation>
        <location evidence="1 2">Nucleus</location>
    </subcellularLocation>
    <subcellularLocation>
        <location evidence="2">Endoplasmic reticulum</location>
    </subcellularLocation>
    <text evidence="2">Colocalizes with ERN1 and KDR in the endoplasmic reticulum in endothelial cells in a vascular endothelial growth factor (VEGF)-dependent manner. Colocalizes in the nucleus with SIRT1.</text>
</comment>
<comment type="subcellular location">
    <molecule>Isoform 1</molecule>
    <subcellularLocation>
        <location evidence="2">Nucleus</location>
    </subcellularLocation>
    <subcellularLocation>
        <location evidence="2">Cytoplasm</location>
    </subcellularLocation>
    <subcellularLocation>
        <location evidence="2">Endoplasmic reticulum membrane</location>
        <topology evidence="2">Single-pass type II membrane protein</topology>
    </subcellularLocation>
    <subcellularLocation>
        <location evidence="2">Endoplasmic reticulum membrane</location>
        <topology evidence="2">Peripheral membrane protein</topology>
    </subcellularLocation>
    <subcellularLocation>
        <location evidence="2">Membrane</location>
        <topology evidence="2">Peripheral membrane protein</topology>
    </subcellularLocation>
    <text evidence="1 2">Shows no preferential localization to either the nucleus or the cytoplasm. Shuttles between the nucleus and the cytoplasm in a CRM1-dependent manner. Localizes predominantly at the endoplasmic reticulum membrane as a membrane-spanning protein; whereas may be only marginally localized on the cytosolic side of the ER membrane as a peripheral membrane.</text>
</comment>
<comment type="alternative products">
    <event type="alternative splicing"/>
    <isoform>
        <id>Q3SZZ2-1</id>
        <name>1</name>
        <sequence type="displayed"/>
    </isoform>
    <text evidence="6">Additional isoforms seem to exist.</text>
</comment>
<comment type="domain">
    <text evidence="1 2">Isoform 1 N-terminus domain is necessary for nuclear localization targeting. Isoform 1 C-terminus domain confers localization to the cytoplasm and is sufficient to impose rapid degradation. Isoform 1 N-terminus and C-terminus regions are necessary for DNA-binding and weak transcriptional activity, respectively.</text>
</comment>
<comment type="PTM">
    <text evidence="1 2">Isoform 1 is ubiquitinated, leading to proteasome-mediated degradation in response to ER stress.</text>
</comment>
<comment type="PTM">
    <text evidence="2">X-box-binding protein 1, cytoplasmic form and luminal form are produced by intramembrane proteolytic cleavage of ER membrane-anchored isoform 1 triggered by HM13/SPP in a DERL1-RNF139-dependent and VCP/p97-independent manner. X-box-binding protein 1, luminal form is ubiquitinated leading to proteasomal degradation.</text>
</comment>
<comment type="PTM">
    <text evidence="1 2">Acetylated by EP300; acetylation positively regulates the transcriptional activity of XBP1. Deacetylated by SIRT1; deacetylation negatively regulates the transcriptional activity of XBP1.</text>
</comment>
<comment type="similarity">
    <text evidence="6">Belongs to the bZIP family.</text>
</comment>
<feature type="chain" id="PRO_0000285213" description="X-box-binding protein 1">
    <location>
        <begin position="1"/>
        <end position="261"/>
    </location>
</feature>
<feature type="chain" id="PRO_0000432569" description="X-box-binding protein 1, cytoplasmic form" evidence="2">
    <location>
        <begin position="1"/>
        <end position="193"/>
    </location>
</feature>
<feature type="chain" id="PRO_0000432570" description="X-box-binding protein 1, luminal form" evidence="2">
    <location>
        <begin position="196"/>
        <end position="261"/>
    </location>
</feature>
<feature type="topological domain" description="Cytoplasmic" evidence="2">
    <location>
        <begin position="1"/>
        <end position="185"/>
    </location>
</feature>
<feature type="transmembrane region" description="Helical; Signal-anchor for type II membrane protein" evidence="2 3">
    <location>
        <begin position="186"/>
        <end position="203"/>
    </location>
</feature>
<feature type="topological domain" description="Lumenal" evidence="2">
    <location>
        <begin position="204"/>
        <end position="261"/>
    </location>
</feature>
<feature type="domain" description="bZIP" evidence="4">
    <location>
        <begin position="70"/>
        <end position="133"/>
    </location>
</feature>
<feature type="region of interest" description="Disordered" evidence="5">
    <location>
        <begin position="27"/>
        <end position="65"/>
    </location>
</feature>
<feature type="region of interest" description="Basic motif" evidence="4">
    <location>
        <begin position="72"/>
        <end position="94"/>
    </location>
</feature>
<feature type="region of interest" description="Nuclear localization signal (NLS)" evidence="2">
    <location>
        <begin position="76"/>
        <end position="92"/>
    </location>
</feature>
<feature type="region of interest" description="Leucine-zipper" evidence="4">
    <location>
        <begin position="98"/>
        <end position="133"/>
    </location>
</feature>
<feature type="compositionally biased region" description="Low complexity" evidence="5">
    <location>
        <begin position="27"/>
        <end position="37"/>
    </location>
</feature>
<feature type="site" description="Cleavage; by HM13/SPP" evidence="2">
    <location>
        <begin position="190"/>
        <end position="191"/>
    </location>
</feature>
<feature type="modified residue" description="Phosphoserine" evidence="2">
    <location>
        <position position="47"/>
    </location>
</feature>
<feature type="modified residue" description="Phosphoserine" evidence="2">
    <location>
        <position position="68"/>
    </location>
</feature>
<proteinExistence type="evidence at transcript level"/>